<gene>
    <name evidence="1" type="primary">plsX</name>
    <name type="ordered locus">BH2493</name>
</gene>
<dbReference type="EC" id="2.3.1.274" evidence="1"/>
<dbReference type="EMBL" id="BA000004">
    <property type="protein sequence ID" value="BAB06212.1"/>
    <property type="molecule type" value="Genomic_DNA"/>
</dbReference>
<dbReference type="PIR" id="E83961">
    <property type="entry name" value="E83961"/>
</dbReference>
<dbReference type="RefSeq" id="WP_010898644.1">
    <property type="nucleotide sequence ID" value="NC_002570.2"/>
</dbReference>
<dbReference type="SMR" id="Q9KA01"/>
<dbReference type="STRING" id="272558.gene:10728391"/>
<dbReference type="GeneID" id="87598012"/>
<dbReference type="KEGG" id="bha:BH2493"/>
<dbReference type="eggNOG" id="COG0416">
    <property type="taxonomic scope" value="Bacteria"/>
</dbReference>
<dbReference type="HOGENOM" id="CLU_039379_1_1_9"/>
<dbReference type="OrthoDB" id="9806408at2"/>
<dbReference type="UniPathway" id="UPA00085"/>
<dbReference type="Proteomes" id="UP000001258">
    <property type="component" value="Chromosome"/>
</dbReference>
<dbReference type="GO" id="GO:0005737">
    <property type="term" value="C:cytoplasm"/>
    <property type="evidence" value="ECO:0007669"/>
    <property type="project" value="UniProtKB-SubCell"/>
</dbReference>
<dbReference type="GO" id="GO:0043811">
    <property type="term" value="F:phosphate:acyl-[acyl carrier protein] acyltransferase activity"/>
    <property type="evidence" value="ECO:0007669"/>
    <property type="project" value="UniProtKB-UniRule"/>
</dbReference>
<dbReference type="GO" id="GO:0006633">
    <property type="term" value="P:fatty acid biosynthetic process"/>
    <property type="evidence" value="ECO:0007669"/>
    <property type="project" value="UniProtKB-UniRule"/>
</dbReference>
<dbReference type="GO" id="GO:0008654">
    <property type="term" value="P:phospholipid biosynthetic process"/>
    <property type="evidence" value="ECO:0007669"/>
    <property type="project" value="UniProtKB-KW"/>
</dbReference>
<dbReference type="Gene3D" id="3.40.718.10">
    <property type="entry name" value="Isopropylmalate Dehydrogenase"/>
    <property type="match status" value="1"/>
</dbReference>
<dbReference type="HAMAP" id="MF_00019">
    <property type="entry name" value="PlsX"/>
    <property type="match status" value="1"/>
</dbReference>
<dbReference type="InterPro" id="IPR003664">
    <property type="entry name" value="FA_synthesis"/>
</dbReference>
<dbReference type="InterPro" id="IPR012281">
    <property type="entry name" value="Phospholipid_synth_PlsX-like"/>
</dbReference>
<dbReference type="NCBIfam" id="TIGR00182">
    <property type="entry name" value="plsX"/>
    <property type="match status" value="1"/>
</dbReference>
<dbReference type="PANTHER" id="PTHR30100">
    <property type="entry name" value="FATTY ACID/PHOSPHOLIPID SYNTHESIS PROTEIN PLSX"/>
    <property type="match status" value="1"/>
</dbReference>
<dbReference type="PANTHER" id="PTHR30100:SF1">
    <property type="entry name" value="PHOSPHATE ACYLTRANSFERASE"/>
    <property type="match status" value="1"/>
</dbReference>
<dbReference type="Pfam" id="PF02504">
    <property type="entry name" value="FA_synthesis"/>
    <property type="match status" value="1"/>
</dbReference>
<dbReference type="PIRSF" id="PIRSF002465">
    <property type="entry name" value="Phsphlp_syn_PlsX"/>
    <property type="match status" value="1"/>
</dbReference>
<dbReference type="SUPFAM" id="SSF53659">
    <property type="entry name" value="Isocitrate/Isopropylmalate dehydrogenase-like"/>
    <property type="match status" value="1"/>
</dbReference>
<sequence length="337" mass="36116">MKIALDVMGGDHAPEAHVEAAIKAVKAFPDLTITLVGNEEEIRPLLPANDPRLPILHTTEKIEDTDQPTTAVRRKKDSSMVLAVREVKEGRADAVISSGNTGALMTAGLLYVGRIQGIDRPALAPMLPTLDEKGFLLLDVGANMDGKPEHLLQYAIMGNTYMEMVRGIKQPRVGLLNVGTEAGKGNELTKAAFPLLEAGPFHFIGNVEARELLNGACDVVVCDGFSGNLVLKSVEGTAGSMFSLLKRELTKTFISKLAVALLKGRFKEIKQVMSYSEYGGASLFGLKAPVIKAHGSSVASSVYHTIAQAYEMVNQQVTTIIKTEVAKATKGSEEKGE</sequence>
<reference key="1">
    <citation type="journal article" date="2000" name="Nucleic Acids Res.">
        <title>Complete genome sequence of the alkaliphilic bacterium Bacillus halodurans and genomic sequence comparison with Bacillus subtilis.</title>
        <authorList>
            <person name="Takami H."/>
            <person name="Nakasone K."/>
            <person name="Takaki Y."/>
            <person name="Maeno G."/>
            <person name="Sasaki R."/>
            <person name="Masui N."/>
            <person name="Fuji F."/>
            <person name="Hirama C."/>
            <person name="Nakamura Y."/>
            <person name="Ogasawara N."/>
            <person name="Kuhara S."/>
            <person name="Horikoshi K."/>
        </authorList>
    </citation>
    <scope>NUCLEOTIDE SEQUENCE [LARGE SCALE GENOMIC DNA]</scope>
    <source>
        <strain>ATCC BAA-125 / DSM 18197 / FERM 7344 / JCM 9153 / C-125</strain>
    </source>
</reference>
<comment type="function">
    <text evidence="1">Catalyzes the reversible formation of acyl-phosphate (acyl-PO(4)) from acyl-[acyl-carrier-protein] (acyl-ACP). This enzyme utilizes acyl-ACP as fatty acyl donor, but not acyl-CoA.</text>
</comment>
<comment type="catalytic activity">
    <reaction evidence="1">
        <text>a fatty acyl-[ACP] + phosphate = an acyl phosphate + holo-[ACP]</text>
        <dbReference type="Rhea" id="RHEA:42292"/>
        <dbReference type="Rhea" id="RHEA-COMP:9685"/>
        <dbReference type="Rhea" id="RHEA-COMP:14125"/>
        <dbReference type="ChEBI" id="CHEBI:43474"/>
        <dbReference type="ChEBI" id="CHEBI:59918"/>
        <dbReference type="ChEBI" id="CHEBI:64479"/>
        <dbReference type="ChEBI" id="CHEBI:138651"/>
        <dbReference type="EC" id="2.3.1.274"/>
    </reaction>
</comment>
<comment type="pathway">
    <text evidence="1">Lipid metabolism; phospholipid metabolism.</text>
</comment>
<comment type="subunit">
    <text evidence="1">Homodimer. Probably interacts with PlsY.</text>
</comment>
<comment type="subcellular location">
    <subcellularLocation>
        <location evidence="1">Cytoplasm</location>
    </subcellularLocation>
    <text evidence="1">Associated with the membrane possibly through PlsY.</text>
</comment>
<comment type="similarity">
    <text evidence="1">Belongs to the PlsX family.</text>
</comment>
<protein>
    <recommendedName>
        <fullName evidence="1">Phosphate acyltransferase</fullName>
        <ecNumber evidence="1">2.3.1.274</ecNumber>
    </recommendedName>
    <alternativeName>
        <fullName evidence="1">Acyl-ACP phosphotransacylase</fullName>
    </alternativeName>
    <alternativeName>
        <fullName evidence="1">Acyl-[acyl-carrier-protein]--phosphate acyltransferase</fullName>
    </alternativeName>
    <alternativeName>
        <fullName evidence="1">Phosphate-acyl-ACP acyltransferase</fullName>
    </alternativeName>
</protein>
<proteinExistence type="inferred from homology"/>
<feature type="chain" id="PRO_0000189844" description="Phosphate acyltransferase">
    <location>
        <begin position="1"/>
        <end position="337"/>
    </location>
</feature>
<evidence type="ECO:0000255" key="1">
    <source>
        <dbReference type="HAMAP-Rule" id="MF_00019"/>
    </source>
</evidence>
<organism>
    <name type="scientific">Halalkalibacterium halodurans (strain ATCC BAA-125 / DSM 18197 / FERM 7344 / JCM 9153 / C-125)</name>
    <name type="common">Bacillus halodurans</name>
    <dbReference type="NCBI Taxonomy" id="272558"/>
    <lineage>
        <taxon>Bacteria</taxon>
        <taxon>Bacillati</taxon>
        <taxon>Bacillota</taxon>
        <taxon>Bacilli</taxon>
        <taxon>Bacillales</taxon>
        <taxon>Bacillaceae</taxon>
        <taxon>Halalkalibacterium (ex Joshi et al. 2022)</taxon>
    </lineage>
</organism>
<keyword id="KW-0963">Cytoplasm</keyword>
<keyword id="KW-0444">Lipid biosynthesis</keyword>
<keyword id="KW-0443">Lipid metabolism</keyword>
<keyword id="KW-0594">Phospholipid biosynthesis</keyword>
<keyword id="KW-1208">Phospholipid metabolism</keyword>
<keyword id="KW-1185">Reference proteome</keyword>
<keyword id="KW-0808">Transferase</keyword>
<accession>Q9KA01</accession>
<name>PLSX_HALH5</name>